<reference evidence="4" key="1">
    <citation type="journal article" date="2005" name="Rapid Commun. Mass Spectrom.">
        <title>Electrospray ionization quadrupole time-of-flight and matrix-assisted laser desorption/ionization tandem time-of-flight mass spectrometric analyses to solve micro-heterogeneity in post-translationally modified peptides from Phoneutria nigriventer (Aranea, Ctenidae) venom.</title>
        <authorList>
            <person name="Pimenta A.M.C."/>
            <person name="Rates B."/>
            <person name="Bloch C. Jr."/>
            <person name="Gomes P.C."/>
            <person name="Santoro M.M."/>
            <person name="de Lima M.E."/>
            <person name="Richardson M."/>
            <person name="Cordeiro M.N."/>
        </authorList>
    </citation>
    <scope>PROTEIN SEQUENCE</scope>
    <scope>SUBCELLULAR LOCATION</scope>
    <scope>TISSUE SPECIFICITY</scope>
    <scope>MASS SPECTROMETRY</scope>
    <scope>PYROGLUTAMATE FORMATION AT GLN-1</scope>
    <scope>AMIDATION AT PHE-13</scope>
    <source>
        <tissue evidence="2">Venom</tissue>
    </source>
</reference>
<sequence length="13" mass="1673">QKKDKKDRFYGLF</sequence>
<keyword id="KW-0027">Amidation</keyword>
<keyword id="KW-0903">Direct protein sequencing</keyword>
<keyword id="KW-0873">Pyrrolidone carboxylic acid</keyword>
<keyword id="KW-0964">Secreted</keyword>
<dbReference type="GO" id="GO:0005576">
    <property type="term" value="C:extracellular region"/>
    <property type="evidence" value="ECO:0000314"/>
    <property type="project" value="UniProtKB"/>
</dbReference>
<feature type="peptide" id="PRO_0000402824" description="Tachykinin-like peptide-XIV" evidence="2">
    <location>
        <begin position="1"/>
        <end position="13"/>
    </location>
</feature>
<feature type="modified residue" description="Pyrrolidone carboxylic acid" evidence="2">
    <location>
        <position position="1"/>
    </location>
</feature>
<feature type="modified residue" description="Phenylalanine amide" evidence="2">
    <location>
        <position position="13"/>
    </location>
</feature>
<organism>
    <name type="scientific">Phoneutria nigriventer</name>
    <name type="common">Brazilian armed spider</name>
    <name type="synonym">Ctenus nigriventer</name>
    <dbReference type="NCBI Taxonomy" id="6918"/>
    <lineage>
        <taxon>Eukaryota</taxon>
        <taxon>Metazoa</taxon>
        <taxon>Ecdysozoa</taxon>
        <taxon>Arthropoda</taxon>
        <taxon>Chelicerata</taxon>
        <taxon>Arachnida</taxon>
        <taxon>Araneae</taxon>
        <taxon>Araneomorphae</taxon>
        <taxon>Entelegynae</taxon>
        <taxon>Lycosoidea</taxon>
        <taxon>Ctenidae</taxon>
        <taxon>Phoneutria</taxon>
    </lineage>
</organism>
<accession>P86311</accession>
<comment type="subcellular location">
    <subcellularLocation>
        <location evidence="2">Secreted</location>
    </subcellularLocation>
</comment>
<comment type="tissue specificity">
    <text evidence="2">Expressed by the venom gland.</text>
</comment>
<comment type="mass spectrometry" mass="1653.83" method="Electrospray" evidence="2"/>
<comment type="similarity">
    <text evidence="1">Belongs to the tachykinin family.</text>
</comment>
<name>TLP14_PHONI</name>
<evidence type="ECO:0000255" key="1"/>
<evidence type="ECO:0000269" key="2">
    <source>
    </source>
</evidence>
<evidence type="ECO:0000303" key="3">
    <source>
    </source>
</evidence>
<evidence type="ECO:0000305" key="4"/>
<evidence type="ECO:0000305" key="5">
    <source>
    </source>
</evidence>
<proteinExistence type="evidence at protein level"/>
<protein>
    <recommendedName>
        <fullName evidence="5">Tachykinin-like peptide-XIV</fullName>
    </recommendedName>
    <alternativeName>
        <fullName evidence="3">P.nigriventer tachykinin peptides XIV</fullName>
        <shortName evidence="3">PnTkP-XIV</shortName>
    </alternativeName>
    <alternativeName>
        <fullName evidence="4">U29-ctenitoxin-Pn1n</fullName>
        <shortName evidence="4">U29-CNTX-Pn1n</shortName>
    </alternativeName>
</protein>